<keyword id="KW-0119">Carbohydrate metabolism</keyword>
<keyword id="KW-0413">Isomerase</keyword>
<sequence>MSLLAQLDQRIRHHGGLIVSCQPVPGSPLDNPAIVAAMALAAEQAGAVALRIEGLANLQAVRPLVTVPVIGLIKRDLPDSPVRITPWLEDIDALAQGGADIIAIDGTQRQRPASVSALLAEIHQLGKVAMADCSSLDDALECWQLGAEIVGTTLSGYTAEETPDEPDLALVQCLSVAGCRVIAEGRYNTPAQAAEAMRCGAWAVTVGSAITRLEHICGWYNTALKAAVCPANEQ</sequence>
<evidence type="ECO:0000255" key="1">
    <source>
        <dbReference type="HAMAP-Rule" id="MF_01235"/>
    </source>
</evidence>
<feature type="chain" id="PRO_1000066916" description="Putative N-acetylmannosamine-6-phosphate 2-epimerase">
    <location>
        <begin position="1"/>
        <end position="234"/>
    </location>
</feature>
<comment type="function">
    <text evidence="1">Converts N-acetylmannosamine-6-phosphate (ManNAc-6-P) to N-acetylglucosamine-6-phosphate (GlcNAc-6-P).</text>
</comment>
<comment type="catalytic activity">
    <reaction evidence="1">
        <text>an N-acyl-D-glucosamine 6-phosphate = an N-acyl-D-mannosamine 6-phosphate</text>
        <dbReference type="Rhea" id="RHEA:23932"/>
        <dbReference type="ChEBI" id="CHEBI:57599"/>
        <dbReference type="ChEBI" id="CHEBI:57666"/>
        <dbReference type="EC" id="5.1.3.9"/>
    </reaction>
</comment>
<comment type="pathway">
    <text evidence="1">Amino-sugar metabolism; N-acetylneuraminate degradation; D-fructose 6-phosphate from N-acetylneuraminate: step 3/5.</text>
</comment>
<comment type="similarity">
    <text evidence="1">Belongs to the NanE family.</text>
</comment>
<organism>
    <name type="scientific">Klebsiella pneumoniae subsp. pneumoniae (strain ATCC 700721 / MGH 78578)</name>
    <dbReference type="NCBI Taxonomy" id="272620"/>
    <lineage>
        <taxon>Bacteria</taxon>
        <taxon>Pseudomonadati</taxon>
        <taxon>Pseudomonadota</taxon>
        <taxon>Gammaproteobacteria</taxon>
        <taxon>Enterobacterales</taxon>
        <taxon>Enterobacteriaceae</taxon>
        <taxon>Klebsiella/Raoultella group</taxon>
        <taxon>Klebsiella</taxon>
        <taxon>Klebsiella pneumoniae complex</taxon>
    </lineage>
</organism>
<dbReference type="EC" id="5.1.3.9" evidence="1"/>
<dbReference type="EMBL" id="CP000647">
    <property type="protein sequence ID" value="ABR79019.1"/>
    <property type="molecule type" value="Genomic_DNA"/>
</dbReference>
<dbReference type="RefSeq" id="WP_004188425.1">
    <property type="nucleotide sequence ID" value="NC_009648.1"/>
</dbReference>
<dbReference type="SMR" id="A6TEN5"/>
<dbReference type="STRING" id="272620.KPN_03626"/>
<dbReference type="PaxDb" id="272620-KPN_03626"/>
<dbReference type="EnsemblBacteria" id="ABR79019">
    <property type="protein sequence ID" value="ABR79019"/>
    <property type="gene ID" value="KPN_03626"/>
</dbReference>
<dbReference type="KEGG" id="kpn:KPN_03626"/>
<dbReference type="HOGENOM" id="CLU_086300_0_0_6"/>
<dbReference type="UniPathway" id="UPA00629">
    <property type="reaction ID" value="UER00682"/>
</dbReference>
<dbReference type="Proteomes" id="UP000000265">
    <property type="component" value="Chromosome"/>
</dbReference>
<dbReference type="GO" id="GO:0005829">
    <property type="term" value="C:cytosol"/>
    <property type="evidence" value="ECO:0007669"/>
    <property type="project" value="TreeGrafter"/>
</dbReference>
<dbReference type="GO" id="GO:0047465">
    <property type="term" value="F:N-acylglucosamine-6-phosphate 2-epimerase activity"/>
    <property type="evidence" value="ECO:0007669"/>
    <property type="project" value="UniProtKB-EC"/>
</dbReference>
<dbReference type="GO" id="GO:0005975">
    <property type="term" value="P:carbohydrate metabolic process"/>
    <property type="evidence" value="ECO:0007669"/>
    <property type="project" value="UniProtKB-UniRule"/>
</dbReference>
<dbReference type="GO" id="GO:0006053">
    <property type="term" value="P:N-acetylmannosamine catabolic process"/>
    <property type="evidence" value="ECO:0007669"/>
    <property type="project" value="TreeGrafter"/>
</dbReference>
<dbReference type="GO" id="GO:0019262">
    <property type="term" value="P:N-acetylneuraminate catabolic process"/>
    <property type="evidence" value="ECO:0007669"/>
    <property type="project" value="UniProtKB-UniRule"/>
</dbReference>
<dbReference type="CDD" id="cd04729">
    <property type="entry name" value="NanE"/>
    <property type="match status" value="1"/>
</dbReference>
<dbReference type="FunFam" id="3.20.20.70:FF:000035">
    <property type="entry name" value="Putative N-acetylmannosamine-6-phosphate 2-epimerase"/>
    <property type="match status" value="1"/>
</dbReference>
<dbReference type="Gene3D" id="3.20.20.70">
    <property type="entry name" value="Aldolase class I"/>
    <property type="match status" value="1"/>
</dbReference>
<dbReference type="HAMAP" id="MF_01235">
    <property type="entry name" value="ManNAc6P_epimer"/>
    <property type="match status" value="1"/>
</dbReference>
<dbReference type="InterPro" id="IPR013785">
    <property type="entry name" value="Aldolase_TIM"/>
</dbReference>
<dbReference type="InterPro" id="IPR007260">
    <property type="entry name" value="NanE"/>
</dbReference>
<dbReference type="InterPro" id="IPR011060">
    <property type="entry name" value="RibuloseP-bd_barrel"/>
</dbReference>
<dbReference type="NCBIfam" id="NF002231">
    <property type="entry name" value="PRK01130.1"/>
    <property type="match status" value="1"/>
</dbReference>
<dbReference type="PANTHER" id="PTHR36204">
    <property type="entry name" value="N-ACETYLMANNOSAMINE-6-PHOSPHATE 2-EPIMERASE-RELATED"/>
    <property type="match status" value="1"/>
</dbReference>
<dbReference type="PANTHER" id="PTHR36204:SF1">
    <property type="entry name" value="N-ACETYLMANNOSAMINE-6-PHOSPHATE 2-EPIMERASE-RELATED"/>
    <property type="match status" value="1"/>
</dbReference>
<dbReference type="Pfam" id="PF04131">
    <property type="entry name" value="NanE"/>
    <property type="match status" value="1"/>
</dbReference>
<dbReference type="SUPFAM" id="SSF51366">
    <property type="entry name" value="Ribulose-phoshate binding barrel"/>
    <property type="match status" value="1"/>
</dbReference>
<gene>
    <name evidence="1" type="primary">nanE</name>
    <name type="ordered locus">KPN78578_35950</name>
    <name type="ORF">KPN_03626</name>
</gene>
<protein>
    <recommendedName>
        <fullName evidence="1">Putative N-acetylmannosamine-6-phosphate 2-epimerase</fullName>
        <ecNumber evidence="1">5.1.3.9</ecNumber>
    </recommendedName>
    <alternativeName>
        <fullName evidence="1">ManNAc-6-P epimerase</fullName>
    </alternativeName>
</protein>
<name>NANE_KLEP7</name>
<proteinExistence type="inferred from homology"/>
<reference key="1">
    <citation type="submission" date="2006-09" db="EMBL/GenBank/DDBJ databases">
        <authorList>
            <consortium name="The Klebsiella pneumonia Genome Sequencing Project"/>
            <person name="McClelland M."/>
            <person name="Sanderson E.K."/>
            <person name="Spieth J."/>
            <person name="Clifton W.S."/>
            <person name="Latreille P."/>
            <person name="Sabo A."/>
            <person name="Pepin K."/>
            <person name="Bhonagiri V."/>
            <person name="Porwollik S."/>
            <person name="Ali J."/>
            <person name="Wilson R.K."/>
        </authorList>
    </citation>
    <scope>NUCLEOTIDE SEQUENCE [LARGE SCALE GENOMIC DNA]</scope>
    <source>
        <strain>ATCC 700721 / MGH 78578</strain>
    </source>
</reference>
<accession>A6TEN5</accession>